<organism>
    <name type="scientific">Pseudoalteromonas phage PM2</name>
    <name type="common">Bacteriophage PM2</name>
    <dbReference type="NCBI Taxonomy" id="2905728"/>
    <lineage>
        <taxon>Viruses</taxon>
        <taxon>Varidnaviria</taxon>
        <taxon>Bamfordvirae</taxon>
        <taxon>Preplasmiviricota</taxon>
        <taxon>Tectiliviricetes</taxon>
        <taxon>Vinavirales</taxon>
        <taxon>Corticoviridae</taxon>
        <taxon>Corticovirus</taxon>
        <taxon>Corticovirus PM2</taxon>
    </lineage>
</organism>
<dbReference type="EMBL" id="AF155037">
    <property type="protein sequence ID" value="AAD43550.1"/>
    <property type="molecule type" value="Genomic_DNA"/>
</dbReference>
<dbReference type="RefSeq" id="NP_049904.1">
    <property type="nucleotide sequence ID" value="NC_000867.1"/>
</dbReference>
<dbReference type="PDB" id="2W0C">
    <property type="method" value="X-ray"/>
    <property type="resolution" value="7.00 A"/>
    <property type="chains" value="P/Q/R/S=1-104"/>
</dbReference>
<dbReference type="PDBsum" id="2W0C"/>
<dbReference type="SMR" id="Q9XJR6"/>
<dbReference type="KEGG" id="vg:1262044"/>
<dbReference type="Proteomes" id="UP000002136">
    <property type="component" value="Genome"/>
</dbReference>
<dbReference type="GO" id="GO:0016020">
    <property type="term" value="C:membrane"/>
    <property type="evidence" value="ECO:0007669"/>
    <property type="project" value="UniProtKB-KW"/>
</dbReference>
<dbReference type="GO" id="GO:0039641">
    <property type="term" value="C:viral inner membrane"/>
    <property type="evidence" value="ECO:0007669"/>
    <property type="project" value="UniProtKB-KW"/>
</dbReference>
<dbReference type="GO" id="GO:0055036">
    <property type="term" value="C:virion membrane"/>
    <property type="evidence" value="ECO:0000314"/>
    <property type="project" value="CACAO"/>
</dbReference>
<dbReference type="InterPro" id="IPR048973">
    <property type="entry name" value="PM2_P3-like"/>
</dbReference>
<dbReference type="Pfam" id="PF20812">
    <property type="entry name" value="PM2_P3"/>
    <property type="match status" value="1"/>
</dbReference>
<comment type="subunit">
    <text evidence="2">Homodimer.</text>
</comment>
<comment type="subcellular location">
    <subcellularLocation>
        <location evidence="3 5">Virion membrane</location>
        <topology evidence="3 5">Single-pass membrane protein</topology>
    </subcellularLocation>
    <text evidence="4">Part of the capsid inner membrane. Deeply embedded in the lipid bilayer. About 20% of the molecule extends to the exterior.</text>
</comment>
<sequence length="104" mass="10758">MNTSVPTSVPTNQSVWGNVSTGLDALISGWARVEQIKAAKASTGQGRVEQAMTPELDNGAAVVVEAPKKAAQPSETLVFGVPQKTLLLGFGGLLVLGLVMRGNK</sequence>
<gene>
    <name type="primary">III</name>
</gene>
<proteinExistence type="evidence at protein level"/>
<feature type="chain" id="PRO_0000339900" description="Protein P3">
    <location>
        <begin position="1"/>
        <end position="104"/>
    </location>
</feature>
<feature type="transmembrane region" description="Helical" evidence="1">
    <location>
        <begin position="77"/>
        <end position="99"/>
    </location>
</feature>
<name>P3_BPPM2</name>
<protein>
    <recommendedName>
        <fullName>Protein P3</fullName>
    </recommendedName>
    <alternativeName>
        <fullName>Protein III</fullName>
    </alternativeName>
</protein>
<keyword id="KW-0002">3D-structure</keyword>
<keyword id="KW-1231">Capsid inner membrane protein</keyword>
<keyword id="KW-0903">Direct protein sequencing</keyword>
<keyword id="KW-0472">Membrane</keyword>
<keyword id="KW-1185">Reference proteome</keyword>
<keyword id="KW-0812">Transmembrane</keyword>
<keyword id="KW-1133">Transmembrane helix</keyword>
<keyword id="KW-0946">Virion</keyword>
<accession>Q9XJR6</accession>
<evidence type="ECO:0000255" key="1"/>
<evidence type="ECO:0000269" key="2">
    <source>
    </source>
</evidence>
<evidence type="ECO:0000305" key="3">
    <source>
    </source>
</evidence>
<evidence type="ECO:0000305" key="4">
    <source>
    </source>
</evidence>
<evidence type="ECO:0000305" key="5">
    <source>
    </source>
</evidence>
<evidence type="ECO:0007744" key="6">
    <source>
        <dbReference type="PDB" id="2W0C"/>
    </source>
</evidence>
<organismHost>
    <name type="scientific">Pseudoalteromonas espejiana</name>
    <dbReference type="NCBI Taxonomy" id="28107"/>
</organismHost>
<reference key="1">
    <citation type="journal article" date="1999" name="Virology">
        <title>The complete genome sequence of PM2, the first lipid-containing bacterial virus to be isolated.</title>
        <authorList>
            <person name="Maennistoe R.H."/>
            <person name="Kivelae H.M."/>
            <person name="Paulin L."/>
            <person name="Bamford D.H."/>
            <person name="Bamford J.K."/>
        </authorList>
    </citation>
    <scope>NUCLEOTIDE SEQUENCE [GENOMIC DNA]</scope>
</reference>
<reference key="2">
    <citation type="journal article" date="1999" name="Virology">
        <title>Purification and protein composition of PM2, the first lipid-containing bacterial virus to be isolated.</title>
        <authorList>
            <person name="Kivelae H.M."/>
            <person name="Maennistoe R.H."/>
            <person name="Kalkkinen N."/>
            <person name="Bamford D.H."/>
        </authorList>
    </citation>
    <scope>PROTEIN SEQUENCE OF 1-10</scope>
</reference>
<reference key="3">
    <citation type="journal article" date="1980" name="Eur. J. Biochem.">
        <title>Structure and synthesis of a lipid-containing bacteriophage. Studies on the structure of the bacteriophage PM2 nucleocapsid.</title>
        <authorList>
            <person name="Satake H."/>
            <person name="Akutsu H."/>
            <person name="Kania M."/>
            <person name="Franklin R.M."/>
        </authorList>
    </citation>
    <scope>SUBCELLULAR LOCATION</scope>
</reference>
<reference key="4">
    <citation type="journal article" date="2002" name="J. Virol.">
        <title>Bacteriophage PM2 has a protein capsid surrounding a spherical proteinaceous lipid core.</title>
        <authorList>
            <person name="Kivelae H.M."/>
            <person name="Kalkkinen N."/>
            <person name="Bamford D.H."/>
        </authorList>
    </citation>
    <scope>SUBCELLULAR LOCATION</scope>
</reference>
<reference evidence="6" key="5">
    <citation type="journal article" date="2008" name="Mol. Cell">
        <title>Insights into virus evolution and membrane biogenesis from the structure of the marine lipid-containing bacteriophage PM2.</title>
        <authorList>
            <person name="Abrescia N.G."/>
            <person name="Grimes J.M."/>
            <person name="Kivela H.M."/>
            <person name="Assenberg R."/>
            <person name="Sutton G.C."/>
            <person name="Butcher S.J."/>
            <person name="Bamford J.K."/>
            <person name="Bamford D.H."/>
            <person name="Stuart D.I."/>
        </authorList>
    </citation>
    <scope>X-RAY CRYSTALLOGRAPHY (7.00 ANGSTROMS)</scope>
    <scope>SUBUNIT</scope>
    <scope>SUBCELLULAR LOCATION</scope>
</reference>